<comment type="function">
    <text>Removal of H(2)O(2), oxidation of toxic reductants, biosynthesis and degradation of lignin, suberization, auxin catabolism, response to environmental stresses such as wounding, pathogen attack and oxidative stress. These functions might be dependent on each isozyme/isoform in each plant tissue.</text>
</comment>
<comment type="catalytic activity">
    <reaction>
        <text>2 a phenolic donor + H2O2 = 2 a phenolic radical donor + 2 H2O</text>
        <dbReference type="Rhea" id="RHEA:56136"/>
        <dbReference type="ChEBI" id="CHEBI:15377"/>
        <dbReference type="ChEBI" id="CHEBI:16240"/>
        <dbReference type="ChEBI" id="CHEBI:139520"/>
        <dbReference type="ChEBI" id="CHEBI:139521"/>
        <dbReference type="EC" id="1.11.1.7"/>
    </reaction>
</comment>
<comment type="cofactor">
    <cofactor>
        <name>Ca(2+)</name>
        <dbReference type="ChEBI" id="CHEBI:29108"/>
    </cofactor>
    <text>Binds 2 calcium ions per subunit.</text>
</comment>
<comment type="cofactor">
    <cofactor>
        <name>heme b</name>
        <dbReference type="ChEBI" id="CHEBI:60344"/>
    </cofactor>
    <text>Binds 1 heme b (iron(II)-protoporphyrin IX) group per subunit.</text>
</comment>
<comment type="subcellular location">
    <subcellularLocation>
        <location evidence="3">Secreted</location>
    </subcellularLocation>
</comment>
<comment type="similarity">
    <text evidence="3">Belongs to the peroxidase family. Classical plant (class III) peroxidase subfamily.</text>
</comment>
<name>PERN_ARMRU</name>
<reference key="1">
    <citation type="journal article" date="1991" name="Biochim. Biophys. Acta">
        <title>The cDNA sequence of a neutral horseradish peroxidase.</title>
        <authorList>
            <person name="Bartonek-Roxa E."/>
            <person name="Eriksson H."/>
            <person name="Mattiasson B."/>
        </authorList>
    </citation>
    <scope>NUCLEOTIDE SEQUENCE [MRNA]</scope>
    <source>
        <tissue>Root</tissue>
    </source>
</reference>
<dbReference type="EC" id="1.11.1.7"/>
<dbReference type="EMBL" id="X57564">
    <property type="protein sequence ID" value="CAA40796.1"/>
    <property type="molecule type" value="mRNA"/>
</dbReference>
<dbReference type="PIR" id="S14268">
    <property type="entry name" value="S14268"/>
</dbReference>
<dbReference type="SMR" id="Q42517"/>
<dbReference type="PeroxiBase" id="87">
    <property type="entry name" value="AruPrx06"/>
</dbReference>
<dbReference type="GlyCosmos" id="Q42517">
    <property type="glycosylation" value="6 sites, No reported glycans"/>
</dbReference>
<dbReference type="SABIO-RK" id="Q42517"/>
<dbReference type="PRO" id="PR:Q42517"/>
<dbReference type="GO" id="GO:0005576">
    <property type="term" value="C:extracellular region"/>
    <property type="evidence" value="ECO:0007669"/>
    <property type="project" value="UniProtKB-SubCell"/>
</dbReference>
<dbReference type="GO" id="GO:0020037">
    <property type="term" value="F:heme binding"/>
    <property type="evidence" value="ECO:0007669"/>
    <property type="project" value="InterPro"/>
</dbReference>
<dbReference type="GO" id="GO:0140825">
    <property type="term" value="F:lactoperoxidase activity"/>
    <property type="evidence" value="ECO:0007669"/>
    <property type="project" value="UniProtKB-EC"/>
</dbReference>
<dbReference type="GO" id="GO:0046872">
    <property type="term" value="F:metal ion binding"/>
    <property type="evidence" value="ECO:0007669"/>
    <property type="project" value="UniProtKB-KW"/>
</dbReference>
<dbReference type="GO" id="GO:0042744">
    <property type="term" value="P:hydrogen peroxide catabolic process"/>
    <property type="evidence" value="ECO:0007669"/>
    <property type="project" value="UniProtKB-KW"/>
</dbReference>
<dbReference type="GO" id="GO:0006979">
    <property type="term" value="P:response to oxidative stress"/>
    <property type="evidence" value="ECO:0007669"/>
    <property type="project" value="InterPro"/>
</dbReference>
<dbReference type="CDD" id="cd00693">
    <property type="entry name" value="secretory_peroxidase"/>
    <property type="match status" value="1"/>
</dbReference>
<dbReference type="FunFam" id="1.10.420.10:FF:000001">
    <property type="entry name" value="Peroxidase"/>
    <property type="match status" value="1"/>
</dbReference>
<dbReference type="FunFam" id="1.10.520.10:FF:000001">
    <property type="entry name" value="Peroxidase"/>
    <property type="match status" value="1"/>
</dbReference>
<dbReference type="Gene3D" id="1.10.520.10">
    <property type="match status" value="1"/>
</dbReference>
<dbReference type="Gene3D" id="1.10.420.10">
    <property type="entry name" value="Peroxidase, domain 2"/>
    <property type="match status" value="1"/>
</dbReference>
<dbReference type="InterPro" id="IPR002016">
    <property type="entry name" value="Haem_peroxidase"/>
</dbReference>
<dbReference type="InterPro" id="IPR010255">
    <property type="entry name" value="Haem_peroxidase_sf"/>
</dbReference>
<dbReference type="InterPro" id="IPR000823">
    <property type="entry name" value="Peroxidase_pln"/>
</dbReference>
<dbReference type="InterPro" id="IPR019794">
    <property type="entry name" value="Peroxidases_AS"/>
</dbReference>
<dbReference type="InterPro" id="IPR019793">
    <property type="entry name" value="Peroxidases_heam-ligand_BS"/>
</dbReference>
<dbReference type="InterPro" id="IPR033905">
    <property type="entry name" value="Secretory_peroxidase"/>
</dbReference>
<dbReference type="PANTHER" id="PTHR31388:SF264">
    <property type="entry name" value="PEROXIDASE 59"/>
    <property type="match status" value="1"/>
</dbReference>
<dbReference type="PANTHER" id="PTHR31388">
    <property type="entry name" value="PEROXIDASE 72-RELATED"/>
    <property type="match status" value="1"/>
</dbReference>
<dbReference type="Pfam" id="PF00141">
    <property type="entry name" value="peroxidase"/>
    <property type="match status" value="1"/>
</dbReference>
<dbReference type="PRINTS" id="PR00458">
    <property type="entry name" value="PEROXIDASE"/>
</dbReference>
<dbReference type="PRINTS" id="PR00461">
    <property type="entry name" value="PLPEROXIDASE"/>
</dbReference>
<dbReference type="SUPFAM" id="SSF48113">
    <property type="entry name" value="Heme-dependent peroxidases"/>
    <property type="match status" value="1"/>
</dbReference>
<dbReference type="PROSITE" id="PS00435">
    <property type="entry name" value="PEROXIDASE_1"/>
    <property type="match status" value="1"/>
</dbReference>
<dbReference type="PROSITE" id="PS00436">
    <property type="entry name" value="PEROXIDASE_2"/>
    <property type="match status" value="1"/>
</dbReference>
<dbReference type="PROSITE" id="PS50873">
    <property type="entry name" value="PEROXIDASE_4"/>
    <property type="match status" value="1"/>
</dbReference>
<evidence type="ECO:0000250" key="1">
    <source>
        <dbReference type="UniProtKB" id="Q42578"/>
    </source>
</evidence>
<evidence type="ECO:0000255" key="2"/>
<evidence type="ECO:0000255" key="3">
    <source>
        <dbReference type="PROSITE-ProRule" id="PRU00297"/>
    </source>
</evidence>
<evidence type="ECO:0000255" key="4">
    <source>
        <dbReference type="PROSITE-ProRule" id="PRU10012"/>
    </source>
</evidence>
<accession>Q42517</accession>
<keyword id="KW-0106">Calcium</keyword>
<keyword id="KW-1015">Disulfide bond</keyword>
<keyword id="KW-0325">Glycoprotein</keyword>
<keyword id="KW-0349">Heme</keyword>
<keyword id="KW-0376">Hydrogen peroxide</keyword>
<keyword id="KW-0408">Iron</keyword>
<keyword id="KW-0479">Metal-binding</keyword>
<keyword id="KW-0560">Oxidoreductase</keyword>
<keyword id="KW-0575">Peroxidase</keyword>
<keyword id="KW-0873">Pyrrolidone carboxylic acid</keyword>
<keyword id="KW-0964">Secreted</keyword>
<keyword id="KW-0732">Signal</keyword>
<organism>
    <name type="scientific">Armoracia rusticana</name>
    <name type="common">Horseradish</name>
    <name type="synonym">Armoracia laphatifolia</name>
    <dbReference type="NCBI Taxonomy" id="3704"/>
    <lineage>
        <taxon>Eukaryota</taxon>
        <taxon>Viridiplantae</taxon>
        <taxon>Streptophyta</taxon>
        <taxon>Embryophyta</taxon>
        <taxon>Tracheophyta</taxon>
        <taxon>Spermatophyta</taxon>
        <taxon>Magnoliopsida</taxon>
        <taxon>eudicotyledons</taxon>
        <taxon>Gunneridae</taxon>
        <taxon>Pentapetalae</taxon>
        <taxon>rosids</taxon>
        <taxon>malvids</taxon>
        <taxon>Brassicales</taxon>
        <taxon>Brassicaceae</taxon>
        <taxon>Cardamineae</taxon>
        <taxon>Armoracia</taxon>
    </lineage>
</organism>
<proteinExistence type="evidence at transcript level"/>
<sequence length="327" mass="35126">MKTQTKVMGGHVLLTVFTLCMLCSAVRAQLSPDIYAKSCPNLLQIVRDQVKIALKAEIRMAASLIRLHFHDCFVNGCDASVLLDGTNSEKLAIPNVNSVRGFEVIDTIKAAVENACPGVVSCADILTLAARDSVYLSGGPQWRVALGRKDGLVANQSSANNLPSPFEPLDAIIAKFAAVGLNVTDVVALSGAHTFGQAKCDLFSNRLFNFTGAGTPDSTLETTLLSDLQTVCPIGGNGNKTAPLDRNSTDAFDNNYFKNLLEGKGLLSSDQILFSSDLAVNTTKRLVEAYSRSQYLFFRDFTCSMIRMGSLVNGASGEVRTNCRVIN</sequence>
<gene>
    <name type="primary">HRPN</name>
</gene>
<feature type="signal peptide" evidence="2">
    <location>
        <begin position="1"/>
        <end position="28"/>
    </location>
</feature>
<feature type="chain" id="PRO_0000023745" description="Peroxidase N">
    <location>
        <begin position="29"/>
        <end position="327"/>
    </location>
</feature>
<feature type="active site" description="Proton acceptor" evidence="3 4">
    <location>
        <position position="70"/>
    </location>
</feature>
<feature type="binding site" evidence="3">
    <location>
        <position position="71"/>
    </location>
    <ligand>
        <name>Ca(2+)</name>
        <dbReference type="ChEBI" id="CHEBI:29108"/>
        <label>1</label>
    </ligand>
</feature>
<feature type="binding site" evidence="3">
    <location>
        <position position="74"/>
    </location>
    <ligand>
        <name>Ca(2+)</name>
        <dbReference type="ChEBI" id="CHEBI:29108"/>
        <label>1</label>
    </ligand>
</feature>
<feature type="binding site" evidence="3">
    <location>
        <position position="76"/>
    </location>
    <ligand>
        <name>Ca(2+)</name>
        <dbReference type="ChEBI" id="CHEBI:29108"/>
        <label>1</label>
    </ligand>
</feature>
<feature type="binding site" evidence="3">
    <location>
        <position position="78"/>
    </location>
    <ligand>
        <name>Ca(2+)</name>
        <dbReference type="ChEBI" id="CHEBI:29108"/>
        <label>1</label>
    </ligand>
</feature>
<feature type="binding site" evidence="3">
    <location>
        <position position="80"/>
    </location>
    <ligand>
        <name>Ca(2+)</name>
        <dbReference type="ChEBI" id="CHEBI:29108"/>
        <label>1</label>
    </ligand>
</feature>
<feature type="binding site" evidence="3">
    <location>
        <position position="163"/>
    </location>
    <ligand>
        <name>substrate</name>
    </ligand>
</feature>
<feature type="binding site" description="axial binding residue" evidence="3">
    <location>
        <position position="193"/>
    </location>
    <ligand>
        <name>heme b</name>
        <dbReference type="ChEBI" id="CHEBI:60344"/>
    </ligand>
    <ligandPart>
        <name>Fe</name>
        <dbReference type="ChEBI" id="CHEBI:18248"/>
    </ligandPart>
</feature>
<feature type="binding site" evidence="3">
    <location>
        <position position="194"/>
    </location>
    <ligand>
        <name>Ca(2+)</name>
        <dbReference type="ChEBI" id="CHEBI:29108"/>
        <label>2</label>
    </ligand>
</feature>
<feature type="binding site" evidence="3">
    <location>
        <position position="245"/>
    </location>
    <ligand>
        <name>Ca(2+)</name>
        <dbReference type="ChEBI" id="CHEBI:29108"/>
        <label>2</label>
    </ligand>
</feature>
<feature type="binding site" evidence="3">
    <location>
        <position position="248"/>
    </location>
    <ligand>
        <name>Ca(2+)</name>
        <dbReference type="ChEBI" id="CHEBI:29108"/>
        <label>2</label>
    </ligand>
</feature>
<feature type="binding site" evidence="3">
    <location>
        <position position="253"/>
    </location>
    <ligand>
        <name>Ca(2+)</name>
        <dbReference type="ChEBI" id="CHEBI:29108"/>
        <label>2</label>
    </ligand>
</feature>
<feature type="site" description="Transition state stabilizer" evidence="3">
    <location>
        <position position="66"/>
    </location>
</feature>
<feature type="modified residue" description="Pyrrolidone carboxylic acid" evidence="1">
    <location>
        <position position="29"/>
    </location>
</feature>
<feature type="glycosylation site" description="N-linked (GlcNAc...) asparagine" evidence="2">
    <location>
        <position position="155"/>
    </location>
</feature>
<feature type="glycosylation site" description="N-linked (GlcNAc...) asparagine" evidence="2">
    <location>
        <position position="182"/>
    </location>
</feature>
<feature type="glycosylation site" description="N-linked (GlcNAc...) asparagine" evidence="2">
    <location>
        <position position="209"/>
    </location>
</feature>
<feature type="glycosylation site" description="N-linked (GlcNAc...) asparagine" evidence="2">
    <location>
        <position position="239"/>
    </location>
</feature>
<feature type="glycosylation site" description="N-linked (GlcNAc...) asparagine" evidence="2">
    <location>
        <position position="247"/>
    </location>
</feature>
<feature type="glycosylation site" description="N-linked (GlcNAc...) asparagine" evidence="2">
    <location>
        <position position="281"/>
    </location>
</feature>
<feature type="disulfide bond" evidence="3">
    <location>
        <begin position="39"/>
        <end position="116"/>
    </location>
</feature>
<feature type="disulfide bond" evidence="3">
    <location>
        <begin position="72"/>
        <end position="77"/>
    </location>
</feature>
<feature type="disulfide bond" evidence="3">
    <location>
        <begin position="122"/>
        <end position="323"/>
    </location>
</feature>
<feature type="disulfide bond" evidence="3">
    <location>
        <begin position="200"/>
        <end position="232"/>
    </location>
</feature>
<protein>
    <recommendedName>
        <fullName>Peroxidase N</fullName>
        <ecNumber>1.11.1.7</ecNumber>
    </recommendedName>
    <alternativeName>
        <fullName>Neutral peroxidase</fullName>
    </alternativeName>
</protein>